<sequence length="190" mass="22110">MSTTPTYNHPVINERSKRMVWVDLEMTGLDISKDVILEMAIVITDAELNVIEKGPNLVIHRSDEVLKNMNDWCIEHHGKSGLTEDVRNSKISLEEAEKIMLEFVRKHTDKGICPLAGNTVHEDRRFLLKEMPTFAEHLHYRIIDVSTIKELSRRWYPYIPSPKKVCGHRALQDIEESIEELKSYRVTVFK</sequence>
<feature type="chain" id="PRO_0000328288" description="Probable oligoribonuclease">
    <location>
        <begin position="1"/>
        <end position="190"/>
    </location>
</feature>
<feature type="domain" description="Exonuclease">
    <location>
        <begin position="19"/>
        <end position="181"/>
    </location>
</feature>
<feature type="active site" evidence="2">
    <location>
        <position position="140"/>
    </location>
</feature>
<organism>
    <name type="scientific">Dictyostelium discoideum</name>
    <name type="common">Social amoeba</name>
    <dbReference type="NCBI Taxonomy" id="44689"/>
    <lineage>
        <taxon>Eukaryota</taxon>
        <taxon>Amoebozoa</taxon>
        <taxon>Evosea</taxon>
        <taxon>Eumycetozoa</taxon>
        <taxon>Dictyostelia</taxon>
        <taxon>Dictyosteliales</taxon>
        <taxon>Dictyosteliaceae</taxon>
        <taxon>Dictyostelium</taxon>
    </lineage>
</organism>
<dbReference type="EC" id="3.1.15.-"/>
<dbReference type="EMBL" id="AAFI02000011">
    <property type="protein sequence ID" value="EAL70561.1"/>
    <property type="molecule type" value="Genomic_DNA"/>
</dbReference>
<dbReference type="EMBL" id="AAFI02000009">
    <property type="protein sequence ID" value="EAL70895.1"/>
    <property type="molecule type" value="Genomic_DNA"/>
</dbReference>
<dbReference type="RefSeq" id="XP_644487.1">
    <property type="nucleotide sequence ID" value="XM_639395.1"/>
</dbReference>
<dbReference type="RefSeq" id="XP_644763.1">
    <property type="nucleotide sequence ID" value="XM_639671.1"/>
</dbReference>
<dbReference type="SMR" id="Q556Y2"/>
<dbReference type="FunCoup" id="Q556Y2">
    <property type="interactions" value="869"/>
</dbReference>
<dbReference type="STRING" id="44689.Q556Y2"/>
<dbReference type="PaxDb" id="44689-DDB0305003"/>
<dbReference type="EnsemblProtists" id="EAL70561">
    <property type="protein sequence ID" value="EAL70561"/>
    <property type="gene ID" value="DDB_G0273741"/>
</dbReference>
<dbReference type="EnsemblProtists" id="EAL70895">
    <property type="protein sequence ID" value="EAL70895"/>
    <property type="gene ID" value="DDB_G0273355"/>
</dbReference>
<dbReference type="GeneID" id="8618865"/>
<dbReference type="GeneID" id="8619111"/>
<dbReference type="KEGG" id="ddi:DDB_G0273355"/>
<dbReference type="KEGG" id="ddi:DDB_G0273741"/>
<dbReference type="dictyBase" id="DDB_G0273355">
    <property type="gene designation" value="rexo2-1"/>
</dbReference>
<dbReference type="dictyBase" id="DDB_G0273741">
    <property type="gene designation" value="rexo2-2"/>
</dbReference>
<dbReference type="VEuPathDB" id="AmoebaDB:DDB_G0273355"/>
<dbReference type="eggNOG" id="KOG3242">
    <property type="taxonomic scope" value="Eukaryota"/>
</dbReference>
<dbReference type="HOGENOM" id="CLU_064761_2_0_1"/>
<dbReference type="InParanoid" id="Q556Y2"/>
<dbReference type="OMA" id="AFFHYRN"/>
<dbReference type="PhylomeDB" id="Q556Y2"/>
<dbReference type="PRO" id="PR:Q556Y2"/>
<dbReference type="Proteomes" id="UP000002195">
    <property type="component" value="Chromosome 2"/>
</dbReference>
<dbReference type="GO" id="GO:0005739">
    <property type="term" value="C:mitochondrion"/>
    <property type="evidence" value="ECO:0000250"/>
    <property type="project" value="dictyBase"/>
</dbReference>
<dbReference type="GO" id="GO:0008408">
    <property type="term" value="F:3'-5' exonuclease activity"/>
    <property type="evidence" value="ECO:0000250"/>
    <property type="project" value="dictyBase"/>
</dbReference>
<dbReference type="GO" id="GO:0000175">
    <property type="term" value="F:3'-5'-RNA exonuclease activity"/>
    <property type="evidence" value="ECO:0000318"/>
    <property type="project" value="GO_Central"/>
</dbReference>
<dbReference type="GO" id="GO:0003676">
    <property type="term" value="F:nucleic acid binding"/>
    <property type="evidence" value="ECO:0007669"/>
    <property type="project" value="InterPro"/>
</dbReference>
<dbReference type="GO" id="GO:0016070">
    <property type="term" value="P:RNA metabolic process"/>
    <property type="evidence" value="ECO:0000305"/>
    <property type="project" value="dictyBase"/>
</dbReference>
<dbReference type="CDD" id="cd06135">
    <property type="entry name" value="Orn"/>
    <property type="match status" value="1"/>
</dbReference>
<dbReference type="FunFam" id="3.30.420.10:FF:000003">
    <property type="entry name" value="Oligoribonuclease"/>
    <property type="match status" value="1"/>
</dbReference>
<dbReference type="Gene3D" id="3.30.420.10">
    <property type="entry name" value="Ribonuclease H-like superfamily/Ribonuclease H"/>
    <property type="match status" value="1"/>
</dbReference>
<dbReference type="InterPro" id="IPR013520">
    <property type="entry name" value="Exonuclease_RNaseT/DNA_pol3"/>
</dbReference>
<dbReference type="InterPro" id="IPR022894">
    <property type="entry name" value="Oligoribonuclease"/>
</dbReference>
<dbReference type="InterPro" id="IPR012337">
    <property type="entry name" value="RNaseH-like_sf"/>
</dbReference>
<dbReference type="InterPro" id="IPR036397">
    <property type="entry name" value="RNaseH_sf"/>
</dbReference>
<dbReference type="NCBIfam" id="NF003765">
    <property type="entry name" value="PRK05359.1"/>
    <property type="match status" value="1"/>
</dbReference>
<dbReference type="PANTHER" id="PTHR11046">
    <property type="entry name" value="OLIGORIBONUCLEASE, MITOCHONDRIAL"/>
    <property type="match status" value="1"/>
</dbReference>
<dbReference type="PANTHER" id="PTHR11046:SF0">
    <property type="entry name" value="OLIGORIBONUCLEASE, MITOCHONDRIAL"/>
    <property type="match status" value="1"/>
</dbReference>
<dbReference type="Pfam" id="PF00929">
    <property type="entry name" value="RNase_T"/>
    <property type="match status" value="1"/>
</dbReference>
<dbReference type="SMART" id="SM00479">
    <property type="entry name" value="EXOIII"/>
    <property type="match status" value="1"/>
</dbReference>
<dbReference type="SUPFAM" id="SSF53098">
    <property type="entry name" value="Ribonuclease H-like"/>
    <property type="match status" value="1"/>
</dbReference>
<name>ORN_DICDI</name>
<protein>
    <recommendedName>
        <fullName>Probable oligoribonuclease</fullName>
        <ecNumber>3.1.15.-</ecNumber>
    </recommendedName>
    <alternativeName>
        <fullName>RNA exonuclease 2 homolog</fullName>
    </alternativeName>
</protein>
<proteinExistence type="inferred from homology"/>
<gene>
    <name type="primary">rexo2-1</name>
    <name type="ORF">DDB_G0273355</name>
</gene>
<gene>
    <name type="primary">rexo2-2</name>
    <name type="ORF">DDB_G0273741</name>
</gene>
<keyword id="KW-0269">Exonuclease</keyword>
<keyword id="KW-0378">Hydrolase</keyword>
<keyword id="KW-0540">Nuclease</keyword>
<keyword id="KW-1185">Reference proteome</keyword>
<reference key="1">
    <citation type="journal article" date="2002" name="Nature">
        <title>Sequence and analysis of chromosome 2 of Dictyostelium discoideum.</title>
        <authorList>
            <person name="Gloeckner G."/>
            <person name="Eichinger L."/>
            <person name="Szafranski K."/>
            <person name="Pachebat J.A."/>
            <person name="Bankier A.T."/>
            <person name="Dear P.H."/>
            <person name="Lehmann R."/>
            <person name="Baumgart C."/>
            <person name="Parra G."/>
            <person name="Abril J.F."/>
            <person name="Guigo R."/>
            <person name="Kumpf K."/>
            <person name="Tunggal B."/>
            <person name="Cox E.C."/>
            <person name="Quail M.A."/>
            <person name="Platzer M."/>
            <person name="Rosenthal A."/>
            <person name="Noegel A.A."/>
        </authorList>
    </citation>
    <scope>NUCLEOTIDE SEQUENCE [LARGE SCALE GENOMIC DNA]</scope>
    <source>
        <strain>AX4</strain>
    </source>
</reference>
<reference key="2">
    <citation type="journal article" date="2005" name="Nature">
        <title>The genome of the social amoeba Dictyostelium discoideum.</title>
        <authorList>
            <person name="Eichinger L."/>
            <person name="Pachebat J.A."/>
            <person name="Gloeckner G."/>
            <person name="Rajandream M.A."/>
            <person name="Sucgang R."/>
            <person name="Berriman M."/>
            <person name="Song J."/>
            <person name="Olsen R."/>
            <person name="Szafranski K."/>
            <person name="Xu Q."/>
            <person name="Tunggal B."/>
            <person name="Kummerfeld S."/>
            <person name="Madera M."/>
            <person name="Konfortov B.A."/>
            <person name="Rivero F."/>
            <person name="Bankier A.T."/>
            <person name="Lehmann R."/>
            <person name="Hamlin N."/>
            <person name="Davies R."/>
            <person name="Gaudet P."/>
            <person name="Fey P."/>
            <person name="Pilcher K."/>
            <person name="Chen G."/>
            <person name="Saunders D."/>
            <person name="Sodergren E.J."/>
            <person name="Davis P."/>
            <person name="Kerhornou A."/>
            <person name="Nie X."/>
            <person name="Hall N."/>
            <person name="Anjard C."/>
            <person name="Hemphill L."/>
            <person name="Bason N."/>
            <person name="Farbrother P."/>
            <person name="Desany B."/>
            <person name="Just E."/>
            <person name="Morio T."/>
            <person name="Rost R."/>
            <person name="Churcher C.M."/>
            <person name="Cooper J."/>
            <person name="Haydock S."/>
            <person name="van Driessche N."/>
            <person name="Cronin A."/>
            <person name="Goodhead I."/>
            <person name="Muzny D.M."/>
            <person name="Mourier T."/>
            <person name="Pain A."/>
            <person name="Lu M."/>
            <person name="Harper D."/>
            <person name="Lindsay R."/>
            <person name="Hauser H."/>
            <person name="James K.D."/>
            <person name="Quiles M."/>
            <person name="Madan Babu M."/>
            <person name="Saito T."/>
            <person name="Buchrieser C."/>
            <person name="Wardroper A."/>
            <person name="Felder M."/>
            <person name="Thangavelu M."/>
            <person name="Johnson D."/>
            <person name="Knights A."/>
            <person name="Loulseged H."/>
            <person name="Mungall K.L."/>
            <person name="Oliver K."/>
            <person name="Price C."/>
            <person name="Quail M.A."/>
            <person name="Urushihara H."/>
            <person name="Hernandez J."/>
            <person name="Rabbinowitsch E."/>
            <person name="Steffen D."/>
            <person name="Sanders M."/>
            <person name="Ma J."/>
            <person name="Kohara Y."/>
            <person name="Sharp S."/>
            <person name="Simmonds M.N."/>
            <person name="Spiegler S."/>
            <person name="Tivey A."/>
            <person name="Sugano S."/>
            <person name="White B."/>
            <person name="Walker D."/>
            <person name="Woodward J.R."/>
            <person name="Winckler T."/>
            <person name="Tanaka Y."/>
            <person name="Shaulsky G."/>
            <person name="Schleicher M."/>
            <person name="Weinstock G.M."/>
            <person name="Rosenthal A."/>
            <person name="Cox E.C."/>
            <person name="Chisholm R.L."/>
            <person name="Gibbs R.A."/>
            <person name="Loomis W.F."/>
            <person name="Platzer M."/>
            <person name="Kay R.R."/>
            <person name="Williams J.G."/>
            <person name="Dear P.H."/>
            <person name="Noegel A.A."/>
            <person name="Barrell B.G."/>
            <person name="Kuspa A."/>
        </authorList>
    </citation>
    <scope>NUCLEOTIDE SEQUENCE [LARGE SCALE GENOMIC DNA]</scope>
    <source>
        <strain>AX4</strain>
    </source>
</reference>
<evidence type="ECO:0000250" key="1"/>
<evidence type="ECO:0000255" key="2"/>
<evidence type="ECO:0000305" key="3"/>
<accession>Q556Y2</accession>
<accession>Q86AJ1</accession>
<comment type="function">
    <text evidence="1">3'-to-5' exoribonuclease specific for small oligoribonucleotides.</text>
</comment>
<comment type="similarity">
    <text evidence="3">Belongs to the oligoribonuclease family.</text>
</comment>
<comment type="caution">
    <text evidence="3">The gene for this protein is duplicated in strains AX3 and AX4. These strains contain a duplication of a segment of 750 kb of chromosome 2 compared to the corresponding sequence in strain AX2.</text>
</comment>